<accession>Q54RZ7</accession>
<name>Y1199_DICDI</name>
<gene>
    <name type="ORF">DDB_G0282895</name>
</gene>
<comment type="catalytic activity">
    <reaction>
        <text>L-seryl-[protein] + ATP = O-phospho-L-seryl-[protein] + ADP + H(+)</text>
        <dbReference type="Rhea" id="RHEA:17989"/>
        <dbReference type="Rhea" id="RHEA-COMP:9863"/>
        <dbReference type="Rhea" id="RHEA-COMP:11604"/>
        <dbReference type="ChEBI" id="CHEBI:15378"/>
        <dbReference type="ChEBI" id="CHEBI:29999"/>
        <dbReference type="ChEBI" id="CHEBI:30616"/>
        <dbReference type="ChEBI" id="CHEBI:83421"/>
        <dbReference type="ChEBI" id="CHEBI:456216"/>
        <dbReference type="EC" id="2.7.11.1"/>
    </reaction>
</comment>
<comment type="catalytic activity">
    <reaction>
        <text>L-threonyl-[protein] + ATP = O-phospho-L-threonyl-[protein] + ADP + H(+)</text>
        <dbReference type="Rhea" id="RHEA:46608"/>
        <dbReference type="Rhea" id="RHEA-COMP:11060"/>
        <dbReference type="Rhea" id="RHEA-COMP:11605"/>
        <dbReference type="ChEBI" id="CHEBI:15378"/>
        <dbReference type="ChEBI" id="CHEBI:30013"/>
        <dbReference type="ChEBI" id="CHEBI:30616"/>
        <dbReference type="ChEBI" id="CHEBI:61977"/>
        <dbReference type="ChEBI" id="CHEBI:456216"/>
        <dbReference type="EC" id="2.7.11.1"/>
    </reaction>
</comment>
<comment type="subcellular location">
    <subcellularLocation>
        <location evidence="5">Membrane</location>
        <topology evidence="5">Single-pass membrane protein</topology>
    </subcellularLocation>
</comment>
<comment type="similarity">
    <text evidence="5">Belongs to the protein kinase superfamily. TKL Ser/Thr protein kinase family.</text>
</comment>
<dbReference type="EC" id="2.7.11.1"/>
<dbReference type="EMBL" id="AAFI02000047">
    <property type="protein sequence ID" value="EAL66027.1"/>
    <property type="molecule type" value="Genomic_DNA"/>
</dbReference>
<dbReference type="RefSeq" id="XP_639340.1">
    <property type="nucleotide sequence ID" value="XM_634248.1"/>
</dbReference>
<dbReference type="SMR" id="Q54RZ7"/>
<dbReference type="FunCoup" id="Q54RZ7">
    <property type="interactions" value="464"/>
</dbReference>
<dbReference type="PaxDb" id="44689-DDB0231199"/>
<dbReference type="EnsemblProtists" id="EAL66027">
    <property type="protein sequence ID" value="EAL66027"/>
    <property type="gene ID" value="DDB_G0282895"/>
</dbReference>
<dbReference type="GeneID" id="8623781"/>
<dbReference type="KEGG" id="ddi:DDB_G0282895"/>
<dbReference type="dictyBase" id="DDB_G0282895"/>
<dbReference type="VEuPathDB" id="AmoebaDB:DDB_G0282895"/>
<dbReference type="eggNOG" id="KOG0192">
    <property type="taxonomic scope" value="Eukaryota"/>
</dbReference>
<dbReference type="HOGENOM" id="CLU_243069_0_0_1"/>
<dbReference type="InParanoid" id="Q54RZ7"/>
<dbReference type="OMA" id="AGTPKWE"/>
<dbReference type="PRO" id="PR:Q54RZ7"/>
<dbReference type="Proteomes" id="UP000002195">
    <property type="component" value="Chromosome 3"/>
</dbReference>
<dbReference type="GO" id="GO:0005737">
    <property type="term" value="C:cytoplasm"/>
    <property type="evidence" value="ECO:0000318"/>
    <property type="project" value="GO_Central"/>
</dbReference>
<dbReference type="GO" id="GO:0016020">
    <property type="term" value="C:membrane"/>
    <property type="evidence" value="ECO:0007669"/>
    <property type="project" value="UniProtKB-SubCell"/>
</dbReference>
<dbReference type="GO" id="GO:0005524">
    <property type="term" value="F:ATP binding"/>
    <property type="evidence" value="ECO:0007669"/>
    <property type="project" value="UniProtKB-KW"/>
</dbReference>
<dbReference type="GO" id="GO:0004672">
    <property type="term" value="F:protein kinase activity"/>
    <property type="evidence" value="ECO:0000318"/>
    <property type="project" value="GO_Central"/>
</dbReference>
<dbReference type="GO" id="GO:0106310">
    <property type="term" value="F:protein serine kinase activity"/>
    <property type="evidence" value="ECO:0007669"/>
    <property type="project" value="RHEA"/>
</dbReference>
<dbReference type="GO" id="GO:0004674">
    <property type="term" value="F:protein serine/threonine kinase activity"/>
    <property type="evidence" value="ECO:0007669"/>
    <property type="project" value="UniProtKB-KW"/>
</dbReference>
<dbReference type="GO" id="GO:0007165">
    <property type="term" value="P:signal transduction"/>
    <property type="evidence" value="ECO:0000318"/>
    <property type="project" value="GO_Central"/>
</dbReference>
<dbReference type="CDD" id="cd13999">
    <property type="entry name" value="STKc_MAP3K-like"/>
    <property type="match status" value="1"/>
</dbReference>
<dbReference type="Gene3D" id="3.30.200.20">
    <property type="entry name" value="Phosphorylase Kinase, domain 1"/>
    <property type="match status" value="1"/>
</dbReference>
<dbReference type="Gene3D" id="1.10.510.10">
    <property type="entry name" value="Transferase(Phosphotransferase) domain 1"/>
    <property type="match status" value="1"/>
</dbReference>
<dbReference type="InterPro" id="IPR011009">
    <property type="entry name" value="Kinase-like_dom_sf"/>
</dbReference>
<dbReference type="InterPro" id="IPR003409">
    <property type="entry name" value="MORN"/>
</dbReference>
<dbReference type="InterPro" id="IPR000719">
    <property type="entry name" value="Prot_kinase_dom"/>
</dbReference>
<dbReference type="InterPro" id="IPR001245">
    <property type="entry name" value="Ser-Thr/Tyr_kinase_cat_dom"/>
</dbReference>
<dbReference type="InterPro" id="IPR008271">
    <property type="entry name" value="Ser/Thr_kinase_AS"/>
</dbReference>
<dbReference type="InterPro" id="IPR050167">
    <property type="entry name" value="Ser_Thr_protein_kinase"/>
</dbReference>
<dbReference type="PANTHER" id="PTHR23257">
    <property type="entry name" value="SERINE-THREONINE PROTEIN KINASE"/>
    <property type="match status" value="1"/>
</dbReference>
<dbReference type="PANTHER" id="PTHR23257:SF962">
    <property type="entry name" value="SERINE_THREONINE-PROTEIN KINASE DDB_G0282895-RELATED"/>
    <property type="match status" value="1"/>
</dbReference>
<dbReference type="Pfam" id="PF02493">
    <property type="entry name" value="MORN"/>
    <property type="match status" value="3"/>
</dbReference>
<dbReference type="Pfam" id="PF07714">
    <property type="entry name" value="PK_Tyr_Ser-Thr"/>
    <property type="match status" value="1"/>
</dbReference>
<dbReference type="PRINTS" id="PR00109">
    <property type="entry name" value="TYRKINASE"/>
</dbReference>
<dbReference type="SMART" id="SM00698">
    <property type="entry name" value="MORN"/>
    <property type="match status" value="3"/>
</dbReference>
<dbReference type="SMART" id="SM00220">
    <property type="entry name" value="S_TKc"/>
    <property type="match status" value="1"/>
</dbReference>
<dbReference type="SUPFAM" id="SSF82185">
    <property type="entry name" value="Histone H3 K4-specific methyltransferase SET7/9 N-terminal domain"/>
    <property type="match status" value="1"/>
</dbReference>
<dbReference type="SUPFAM" id="SSF56112">
    <property type="entry name" value="Protein kinase-like (PK-like)"/>
    <property type="match status" value="1"/>
</dbReference>
<dbReference type="PROSITE" id="PS50011">
    <property type="entry name" value="PROTEIN_KINASE_DOM"/>
    <property type="match status" value="1"/>
</dbReference>
<dbReference type="PROSITE" id="PS00108">
    <property type="entry name" value="PROTEIN_KINASE_ST"/>
    <property type="match status" value="1"/>
</dbReference>
<organism>
    <name type="scientific">Dictyostelium discoideum</name>
    <name type="common">Social amoeba</name>
    <dbReference type="NCBI Taxonomy" id="44689"/>
    <lineage>
        <taxon>Eukaryota</taxon>
        <taxon>Amoebozoa</taxon>
        <taxon>Evosea</taxon>
        <taxon>Eumycetozoa</taxon>
        <taxon>Dictyostelia</taxon>
        <taxon>Dictyosteliales</taxon>
        <taxon>Dictyosteliaceae</taxon>
        <taxon>Dictyostelium</taxon>
    </lineage>
</organism>
<sequence>MNNQFEVFRPNSYTYDVLAKQYTETIASSGHMVLSHHGFYKGNLNENKLKNGKGTFLFPNSIYSGQWNSDKKEGDGTLIILKPQKIQKKSSQSKSQQQPPSQTKKSSSPINLSPRLQGQNPTITTNGSNNNNKVNIESLINKLNDKFNQCEELINQTSQEEFLKQQDYYNGKWINGKANGIGCFHFSKDDSMHYDFWRYGVVIRYANQQNILKPLYDDSVPAGLLNSREILKDMMEDWKSVVVGDDDFPCTRPYLTTPTASISLNRENINIYSNNNSNGTTSPTSPSILSPTQVPLSPPKVNTAPSTLISEDDNNFTSGSGFCSPSSSLSIKMSSPISSGLQHSKTQPNVSQSQNQQIQQQQQQQQQQPSLLVNSTIVQTNTNNNKFNDLLINQRNQQKILKKQLLKSNQQKQSFGIITSNYLKSRLENEEKFFMTLILFISKWEIPFKSFNIPNNPSIHASFLIFVPDTDNCTFISLSNLIMQSNVLERLIFKLLIDPMSKVLNSTALNTLTESQTLGNLSTYNNNNNNTINNTISIGQSKSANSSPNKISPSVSLVGVSSLTTLPSSTPEERELHKLLPICLDLDETPHIEKECIASILNIFKLFPTIEDYQPPQFIPDTICKFISCFKKTRALENYLLQKQFQMSKDYFFKPTATTATPNNNNNSSGNSKLTTTTHLTNNTTTTTIVSGSKTLKRTKVTPPSQSSSSSSPSSDQTNLPSIAISSSNGISYKSPPVTSPPPTKPTFSVSLTTSNKIDISASNPNGNGMKLYGSNATTTAASSILNNNNNNNNNNNNNNNNNNNNNNNNNNNCGQRRQTVESIFPTFKQQSNTDLLTSLMQSTSISLSNKYSSSTTTISTVDQTPPELTLQSLNILLSQFKQSYLFPDSITLSFNYLTKQKENIEQMEKIIQSKIQLIQETKPKQQQLQQQQQKNLLNYSSSFNEYLTNHDNLIDSILIGLKNDLSQLQKSFEICLTLYKEMITQQIQLVLKRLKSAHSFINQLIGLPQSRVSKLPKDFIVRFIKHTHRIIYQLYNSANNTFIKLDNEIKIDIDEFIVQSNDLFSKLPNGAITTNGTTMNSIPSPVSPIGSPPLPSISASVYEYFLGKKSSSSLTLNVSQQQQSSNSLDRSSVQFEPSDITPGPFSFISPLDKIIEEIMSGHYQLILPVASSGDDLLVSVVSLGLIDLRSYLSSNNRLKEISKSSLIQLFNILLHSTVICHNINSYLPEVFKTLILLLPFYPKKDELFIKYKEIFIGFMELCVIDELCGFSFIYLEFLGLLVKPKKKGLRKELKKEFVELFPIQLFIDIMEKPIVDATNKNAEKTRAQAAQILINLSISSIECLLEVKSKNALGPILDICKFGQAFAHTQIEESELQILQFLGEGALAEVHKGIWKGKEVAVKIFNEGSFSFRLEDFLKEVAILGLISHPNLLKLKGACIAPRSHKSTFMIVTELMHKGTLLEVINKNKPLSLEDIIKYALSVAQGLAYLHSVDFIHRDIKAANILVDKNNNAKVGDFGLSRVIDNNFNMTAVAGTPKWESPECLMGEAYTSASDVYSYGMMLFELATGDEPFLEIQSIVELARSVCDKKLKPKISSSVPNFISSLIKDCLHNSPKKRPTMNQIIQKLCNHKC</sequence>
<proteinExistence type="inferred from homology"/>
<protein>
    <recommendedName>
        <fullName>Probable serine/threonine-protein kinase DDB_G0282895</fullName>
        <ecNumber>2.7.11.1</ecNumber>
    </recommendedName>
</protein>
<keyword id="KW-0067">ATP-binding</keyword>
<keyword id="KW-0418">Kinase</keyword>
<keyword id="KW-0472">Membrane</keyword>
<keyword id="KW-0547">Nucleotide-binding</keyword>
<keyword id="KW-1185">Reference proteome</keyword>
<keyword id="KW-0677">Repeat</keyword>
<keyword id="KW-0723">Serine/threonine-protein kinase</keyword>
<keyword id="KW-0808">Transferase</keyword>
<keyword id="KW-0812">Transmembrane</keyword>
<keyword id="KW-1133">Transmembrane helix</keyword>
<evidence type="ECO:0000255" key="1"/>
<evidence type="ECO:0000255" key="2">
    <source>
        <dbReference type="PROSITE-ProRule" id="PRU00159"/>
    </source>
</evidence>
<evidence type="ECO:0000255" key="3">
    <source>
        <dbReference type="PROSITE-ProRule" id="PRU10027"/>
    </source>
</evidence>
<evidence type="ECO:0000256" key="4">
    <source>
        <dbReference type="SAM" id="MobiDB-lite"/>
    </source>
</evidence>
<evidence type="ECO:0000305" key="5"/>
<reference key="1">
    <citation type="journal article" date="2005" name="Nature">
        <title>The genome of the social amoeba Dictyostelium discoideum.</title>
        <authorList>
            <person name="Eichinger L."/>
            <person name="Pachebat J.A."/>
            <person name="Gloeckner G."/>
            <person name="Rajandream M.A."/>
            <person name="Sucgang R."/>
            <person name="Berriman M."/>
            <person name="Song J."/>
            <person name="Olsen R."/>
            <person name="Szafranski K."/>
            <person name="Xu Q."/>
            <person name="Tunggal B."/>
            <person name="Kummerfeld S."/>
            <person name="Madera M."/>
            <person name="Konfortov B.A."/>
            <person name="Rivero F."/>
            <person name="Bankier A.T."/>
            <person name="Lehmann R."/>
            <person name="Hamlin N."/>
            <person name="Davies R."/>
            <person name="Gaudet P."/>
            <person name="Fey P."/>
            <person name="Pilcher K."/>
            <person name="Chen G."/>
            <person name="Saunders D."/>
            <person name="Sodergren E.J."/>
            <person name="Davis P."/>
            <person name="Kerhornou A."/>
            <person name="Nie X."/>
            <person name="Hall N."/>
            <person name="Anjard C."/>
            <person name="Hemphill L."/>
            <person name="Bason N."/>
            <person name="Farbrother P."/>
            <person name="Desany B."/>
            <person name="Just E."/>
            <person name="Morio T."/>
            <person name="Rost R."/>
            <person name="Churcher C.M."/>
            <person name="Cooper J."/>
            <person name="Haydock S."/>
            <person name="van Driessche N."/>
            <person name="Cronin A."/>
            <person name="Goodhead I."/>
            <person name="Muzny D.M."/>
            <person name="Mourier T."/>
            <person name="Pain A."/>
            <person name="Lu M."/>
            <person name="Harper D."/>
            <person name="Lindsay R."/>
            <person name="Hauser H."/>
            <person name="James K.D."/>
            <person name="Quiles M."/>
            <person name="Madan Babu M."/>
            <person name="Saito T."/>
            <person name="Buchrieser C."/>
            <person name="Wardroper A."/>
            <person name="Felder M."/>
            <person name="Thangavelu M."/>
            <person name="Johnson D."/>
            <person name="Knights A."/>
            <person name="Loulseged H."/>
            <person name="Mungall K.L."/>
            <person name="Oliver K."/>
            <person name="Price C."/>
            <person name="Quail M.A."/>
            <person name="Urushihara H."/>
            <person name="Hernandez J."/>
            <person name="Rabbinowitsch E."/>
            <person name="Steffen D."/>
            <person name="Sanders M."/>
            <person name="Ma J."/>
            <person name="Kohara Y."/>
            <person name="Sharp S."/>
            <person name="Simmonds M.N."/>
            <person name="Spiegler S."/>
            <person name="Tivey A."/>
            <person name="Sugano S."/>
            <person name="White B."/>
            <person name="Walker D."/>
            <person name="Woodward J.R."/>
            <person name="Winckler T."/>
            <person name="Tanaka Y."/>
            <person name="Shaulsky G."/>
            <person name="Schleicher M."/>
            <person name="Weinstock G.M."/>
            <person name="Rosenthal A."/>
            <person name="Cox E.C."/>
            <person name="Chisholm R.L."/>
            <person name="Gibbs R.A."/>
            <person name="Loomis W.F."/>
            <person name="Platzer M."/>
            <person name="Kay R.R."/>
            <person name="Williams J.G."/>
            <person name="Dear P.H."/>
            <person name="Noegel A.A."/>
            <person name="Barrell B.G."/>
            <person name="Kuspa A."/>
        </authorList>
    </citation>
    <scope>NUCLEOTIDE SEQUENCE [LARGE SCALE GENOMIC DNA]</scope>
    <source>
        <strain>AX4</strain>
    </source>
</reference>
<feature type="chain" id="PRO_0000355156" description="Probable serine/threonine-protein kinase DDB_G0282895">
    <location>
        <begin position="1"/>
        <end position="1634"/>
    </location>
</feature>
<feature type="transmembrane region" description="Helical" evidence="1">
    <location>
        <begin position="1255"/>
        <end position="1275"/>
    </location>
</feature>
<feature type="repeat" description="MORN 1">
    <location>
        <begin position="40"/>
        <end position="63"/>
    </location>
</feature>
<feature type="repeat" description="MORN 2">
    <location>
        <begin position="169"/>
        <end position="191"/>
    </location>
</feature>
<feature type="domain" description="Protein kinase" evidence="2">
    <location>
        <begin position="1377"/>
        <end position="1634"/>
    </location>
</feature>
<feature type="region of interest" description="Disordered" evidence="4">
    <location>
        <begin position="84"/>
        <end position="131"/>
    </location>
</feature>
<feature type="region of interest" description="Disordered" evidence="4">
    <location>
        <begin position="273"/>
        <end position="367"/>
    </location>
</feature>
<feature type="region of interest" description="Disordered" evidence="4">
    <location>
        <begin position="658"/>
        <end position="750"/>
    </location>
</feature>
<feature type="region of interest" description="Disordered" evidence="4">
    <location>
        <begin position="783"/>
        <end position="816"/>
    </location>
</feature>
<feature type="compositionally biased region" description="Low complexity" evidence="4">
    <location>
        <begin position="89"/>
        <end position="109"/>
    </location>
</feature>
<feature type="compositionally biased region" description="Polar residues" evidence="4">
    <location>
        <begin position="110"/>
        <end position="119"/>
    </location>
</feature>
<feature type="compositionally biased region" description="Low complexity" evidence="4">
    <location>
        <begin position="120"/>
        <end position="131"/>
    </location>
</feature>
<feature type="compositionally biased region" description="Low complexity" evidence="4">
    <location>
        <begin position="273"/>
        <end position="292"/>
    </location>
</feature>
<feature type="compositionally biased region" description="Low complexity" evidence="4">
    <location>
        <begin position="318"/>
        <end position="339"/>
    </location>
</feature>
<feature type="compositionally biased region" description="Polar residues" evidence="4">
    <location>
        <begin position="340"/>
        <end position="351"/>
    </location>
</feature>
<feature type="compositionally biased region" description="Low complexity" evidence="4">
    <location>
        <begin position="352"/>
        <end position="367"/>
    </location>
</feature>
<feature type="compositionally biased region" description="Low complexity" evidence="4">
    <location>
        <begin position="658"/>
        <end position="688"/>
    </location>
</feature>
<feature type="compositionally biased region" description="Low complexity" evidence="4">
    <location>
        <begin position="703"/>
        <end position="715"/>
    </location>
</feature>
<feature type="compositionally biased region" description="Polar residues" evidence="4">
    <location>
        <begin position="716"/>
        <end position="732"/>
    </location>
</feature>
<feature type="compositionally biased region" description="Low complexity" evidence="4">
    <location>
        <begin position="787"/>
        <end position="813"/>
    </location>
</feature>
<feature type="active site" description="Proton acceptor" evidence="2 3">
    <location>
        <position position="1500"/>
    </location>
</feature>
<feature type="binding site" evidence="2">
    <location>
        <begin position="1383"/>
        <end position="1391"/>
    </location>
    <ligand>
        <name>ATP</name>
        <dbReference type="ChEBI" id="CHEBI:30616"/>
    </ligand>
</feature>
<feature type="binding site" evidence="2">
    <location>
        <position position="1404"/>
    </location>
    <ligand>
        <name>ATP</name>
        <dbReference type="ChEBI" id="CHEBI:30616"/>
    </ligand>
</feature>